<reference evidence="10" key="1">
    <citation type="journal article" date="2000" name="Development">
        <title>MES-1, a protein required for unequal divisions of the germline in early C. elegans embryos, resembles receptor tyrosine kinases and is localized to the boundary between the germline and gut cells.</title>
        <authorList>
            <person name="Berkowitz L.A."/>
            <person name="Strome S."/>
        </authorList>
    </citation>
    <scope>NUCLEOTIDE SEQUENCE [MRNA]</scope>
    <scope>SUBCELLULAR LOCATION</scope>
    <scope>DEVELOPMENTAL STAGE</scope>
</reference>
<reference evidence="11" key="2">
    <citation type="journal article" date="1998" name="Science">
        <title>Genome sequence of the nematode C. elegans: a platform for investigating biology.</title>
        <authorList>
            <consortium name="The C. elegans sequencing consortium"/>
        </authorList>
    </citation>
    <scope>NUCLEOTIDE SEQUENCE [LARGE SCALE GENOMIC DNA]</scope>
    <source>
        <strain evidence="11">Bristol N2</strain>
    </source>
</reference>
<reference evidence="9" key="3">
    <citation type="journal article" date="1995" name="Development">
        <title>Transformation of the germ line into muscle in mes-1 mutant embryos of C. elegans.</title>
        <authorList>
            <person name="Strome S."/>
            <person name="Martin P."/>
            <person name="Schierenberg E."/>
            <person name="Paulsen J."/>
        </authorList>
    </citation>
    <scope>FUNCTION</scope>
    <scope>DISRUPTION PHENOTYPE</scope>
    <scope>MUTAGENESIS OF GLY-89 AND SER-441</scope>
</reference>
<reference evidence="9" key="4">
    <citation type="journal article" date="2002" name="Dev. Cell">
        <title>SRC-1 and Wnt signaling act together to specify endoderm and to control cleavage orientation in early C. elegans embryos.</title>
        <authorList>
            <person name="Bei Y."/>
            <person name="Hogan J."/>
            <person name="Berkowitz L.A."/>
            <person name="Soto M."/>
            <person name="Rocheleau C.E."/>
            <person name="Pang K.M."/>
            <person name="Collins J."/>
            <person name="Mello C.C."/>
        </authorList>
    </citation>
    <scope>FUNCTION</scope>
    <scope>SUBCELLULAR LOCATION</scope>
    <scope>DEVELOPMENTAL STAGE</scope>
    <scope>DISRUPTION PHENOTYPE</scope>
</reference>
<reference evidence="9" key="5">
    <citation type="journal article" date="2003" name="Development">
        <title>LET-99 opposes Galpha/GPR signaling to generate asymmetry for spindle positioning in response to PAR and MES-1/SRC-1 signaling.</title>
        <authorList>
            <person name="Tsou M.-F.B."/>
            <person name="Hayashi A."/>
            <person name="Rose L.S."/>
        </authorList>
    </citation>
    <scope>FUNCTION</scope>
</reference>
<reference evidence="9" key="6">
    <citation type="journal article" date="2003" name="Genes Dev.">
        <title>A complex of LIN-5 and GPR proteins regulates G protein signaling and spindle function in C elegans.</title>
        <authorList>
            <person name="Srinivasan D.G."/>
            <person name="Fisk R.M."/>
            <person name="Xu H."/>
            <person name="van den Heuvel S."/>
        </authorList>
    </citation>
    <scope>FUNCTION</scope>
    <scope>DISRUPTION PHENOTYPE</scope>
</reference>
<proteinExistence type="evidence at protein level"/>
<protein>
    <recommendedName>
        <fullName evidence="9">Protein mes-1</fullName>
    </recommendedName>
    <alternativeName>
        <fullName evidence="12">Maternal-effect sterile protein 1</fullName>
    </alternativeName>
</protein>
<sequence>MKIHHFLTLLCTFLPLTTTALTNSTPLSLLGPCYKRCVTKFGETKEQLTNAETISLEYDVSNNTEFSLCKLGCNSHEYTDLNLAAFRYGQLAYQKILTTVEDVPTRGTVLNDVFIVCLDTSFMPSNNSAPSAKRLLSGTVLLVLDEDVAKADNVFLIEVLARNADKSAVQVISQQWCYSSNCNITFNAPTEVSSFDVRLRVSTFDSNGQVGGINFSKWHNINQILTKTFVDMSLKSVVWKAEKAAANFVFNLTASDHVPACSLQMIYRSSLSSELLHRNFYLDHTLEVFVNNLDFDKIYTMQLAPSGTHDRSTPSLASAVIEIPPCRHLVDDYSMCAPPPVSSLSYNWNLSPTSEYELLIKWKLLNYMDGLNVTEELSIPVAYFLLNAHPLITANNEQCEKYEKIRRVVSYGLRELVFHVPDTDCNYEVEMTAVDTNQRISEVKKIQVFRFNVPPYVSFLQASDIPTSVELMAVVLATSAIFALIALFLLYRKRKRDKKARFQMYKDAEAGVSYDYVATTESLGSVVQIRSTNFRFEPVENIDGNIEAALAQQQKFEGGTMNSMFRTYYNLDHPVKVPAHMAEASSDEDNGYENIRYSYFGSELSDDVFEEDIYMTHKSLSIYCQDSPLTTPMAPIAPYEHFDDIPSHQYRNFQVHNFNERIEKQAYWLMATVVDVVRRELYSLKVPKDYTPETISAMRKELEFLRTLAPHGNCRRFEGVVIGRWDDLPRQVIGILIENTRGGTLRNYIAAVGSVFRNCSLATDHDSFASQQDMNSTQHPFDKLSTEADENNSKKVKIQEITDSLSIRFCQFAEQVSSALEHLHSAGSVHTRVTTLNIYLLHNYSDPFDMLPDQVVKLGNFGFAVQNSEDVVLDDNLQPPEVIKGEKYEARGDIWQFGLCLAEMCSLGDLEQSEVGTLKSGHDTFKNLPSTQVLRDAAKRCLSARTRPSASDLCGVFKSVNVAATV</sequence>
<dbReference type="EMBL" id="AF200199">
    <property type="protein sequence ID" value="AAF13716.1"/>
    <property type="molecule type" value="mRNA"/>
</dbReference>
<dbReference type="EMBL" id="BX284606">
    <property type="protein sequence ID" value="CAA91758.2"/>
    <property type="molecule type" value="Genomic_DNA"/>
</dbReference>
<dbReference type="PIR" id="T22681">
    <property type="entry name" value="T22681"/>
</dbReference>
<dbReference type="RefSeq" id="NP_741906.1">
    <property type="nucleotide sequence ID" value="NM_171780.8"/>
</dbReference>
<dbReference type="SMR" id="G5EBL2"/>
<dbReference type="FunCoup" id="G5EBL2">
    <property type="interactions" value="132"/>
</dbReference>
<dbReference type="IntAct" id="G5EBL2">
    <property type="interactions" value="1"/>
</dbReference>
<dbReference type="STRING" id="6239.F54F7.5.1"/>
<dbReference type="GlyCosmos" id="G5EBL2">
    <property type="glycosylation" value="6 sites, No reported glycans"/>
</dbReference>
<dbReference type="PaxDb" id="6239-F54F7.5"/>
<dbReference type="EnsemblMetazoa" id="F54F7.5.1">
    <property type="protein sequence ID" value="F54F7.5.1"/>
    <property type="gene ID" value="WBGene00003219"/>
</dbReference>
<dbReference type="GeneID" id="181362"/>
<dbReference type="KEGG" id="cel:CELE_F54F7.5"/>
<dbReference type="AGR" id="WB:WBGene00003219"/>
<dbReference type="CTD" id="181362"/>
<dbReference type="WormBase" id="F54F7.5">
    <property type="protein sequence ID" value="CE28237"/>
    <property type="gene ID" value="WBGene00003219"/>
    <property type="gene designation" value="mes-1"/>
</dbReference>
<dbReference type="eggNOG" id="ENOG502TGP9">
    <property type="taxonomic scope" value="Eukaryota"/>
</dbReference>
<dbReference type="GeneTree" id="ENSGT00940000176578"/>
<dbReference type="HOGENOM" id="CLU_296878_0_0_1"/>
<dbReference type="InParanoid" id="G5EBL2"/>
<dbReference type="OrthoDB" id="5838883at2759"/>
<dbReference type="SignaLink" id="G5EBL2"/>
<dbReference type="PRO" id="PR:G5EBL2"/>
<dbReference type="Proteomes" id="UP000001940">
    <property type="component" value="Chromosome X"/>
</dbReference>
<dbReference type="Bgee" id="WBGene00003219">
    <property type="expression patterns" value="Expressed in germ line (C elegans) and 4 other cell types or tissues"/>
</dbReference>
<dbReference type="GO" id="GO:0005886">
    <property type="term" value="C:plasma membrane"/>
    <property type="evidence" value="ECO:0000314"/>
    <property type="project" value="WormBase"/>
</dbReference>
<dbReference type="GO" id="GO:0005524">
    <property type="term" value="F:ATP binding"/>
    <property type="evidence" value="ECO:0007669"/>
    <property type="project" value="UniProtKB-KW"/>
</dbReference>
<dbReference type="GO" id="GO:0004713">
    <property type="term" value="F:protein tyrosine kinase activity"/>
    <property type="evidence" value="ECO:0000250"/>
    <property type="project" value="WormBase"/>
</dbReference>
<dbReference type="GO" id="GO:0008356">
    <property type="term" value="P:asymmetric cell division"/>
    <property type="evidence" value="ECO:0000315"/>
    <property type="project" value="WormBase"/>
</dbReference>
<dbReference type="GO" id="GO:0045167">
    <property type="term" value="P:asymmetric protein localization involved in cell fate determination"/>
    <property type="evidence" value="ECO:0000315"/>
    <property type="project" value="WormBase"/>
</dbReference>
<dbReference type="GO" id="GO:0001708">
    <property type="term" value="P:cell fate specification"/>
    <property type="evidence" value="ECO:0000315"/>
    <property type="project" value="WormBase"/>
</dbReference>
<dbReference type="GO" id="GO:0003006">
    <property type="term" value="P:developmental process involved in reproduction"/>
    <property type="evidence" value="ECO:0000315"/>
    <property type="project" value="UniProtKB"/>
</dbReference>
<dbReference type="GO" id="GO:0048557">
    <property type="term" value="P:embryonic digestive tract morphogenesis"/>
    <property type="evidence" value="ECO:0000316"/>
    <property type="project" value="UniProtKB"/>
</dbReference>
<dbReference type="GO" id="GO:0040001">
    <property type="term" value="P:establishment of mitotic spindle localization"/>
    <property type="evidence" value="ECO:0000315"/>
    <property type="project" value="WormBase"/>
</dbReference>
<dbReference type="GO" id="GO:0007163">
    <property type="term" value="P:establishment or maintenance of cell polarity"/>
    <property type="evidence" value="ECO:0000315"/>
    <property type="project" value="WormBase"/>
</dbReference>
<dbReference type="GO" id="GO:0007276">
    <property type="term" value="P:gamete generation"/>
    <property type="evidence" value="ECO:0000315"/>
    <property type="project" value="WormBase"/>
</dbReference>
<dbReference type="GO" id="GO:0070986">
    <property type="term" value="P:left/right axis specification"/>
    <property type="evidence" value="ECO:0000316"/>
    <property type="project" value="UniProtKB"/>
</dbReference>
<dbReference type="FunFam" id="1.10.510.10:FF:002520">
    <property type="entry name" value="Protein mes-1"/>
    <property type="match status" value="1"/>
</dbReference>
<dbReference type="Gene3D" id="1.10.510.10">
    <property type="entry name" value="Transferase(Phosphotransferase) domain 1"/>
    <property type="match status" value="1"/>
</dbReference>
<dbReference type="InterPro" id="IPR011009">
    <property type="entry name" value="Kinase-like_dom_sf"/>
</dbReference>
<dbReference type="InterPro" id="IPR000719">
    <property type="entry name" value="Prot_kinase_dom"/>
</dbReference>
<dbReference type="InterPro" id="IPR001245">
    <property type="entry name" value="Ser-Thr/Tyr_kinase_cat_dom"/>
</dbReference>
<dbReference type="InterPro" id="IPR051997">
    <property type="entry name" value="STK_NEK"/>
</dbReference>
<dbReference type="InterPro" id="IPR020635">
    <property type="entry name" value="Tyr_kinase_cat_dom"/>
</dbReference>
<dbReference type="PANTHER" id="PTHR44535">
    <property type="entry name" value="PROTEIN CBG16200"/>
    <property type="match status" value="1"/>
</dbReference>
<dbReference type="PANTHER" id="PTHR44535:SF1">
    <property type="entry name" value="SERINE_THREONINE-PROTEIN KINASE NEK9"/>
    <property type="match status" value="1"/>
</dbReference>
<dbReference type="Pfam" id="PF07714">
    <property type="entry name" value="PK_Tyr_Ser-Thr"/>
    <property type="match status" value="1"/>
</dbReference>
<dbReference type="SMART" id="SM00219">
    <property type="entry name" value="TyrKc"/>
    <property type="match status" value="1"/>
</dbReference>
<dbReference type="SUPFAM" id="SSF56112">
    <property type="entry name" value="Protein kinase-like (PK-like)"/>
    <property type="match status" value="1"/>
</dbReference>
<dbReference type="PROSITE" id="PS50011">
    <property type="entry name" value="PROTEIN_KINASE_DOM"/>
    <property type="match status" value="1"/>
</dbReference>
<name>MES1_CAEEL</name>
<organism>
    <name type="scientific">Caenorhabditis elegans</name>
    <dbReference type="NCBI Taxonomy" id="6239"/>
    <lineage>
        <taxon>Eukaryota</taxon>
        <taxon>Metazoa</taxon>
        <taxon>Ecdysozoa</taxon>
        <taxon>Nematoda</taxon>
        <taxon>Chromadorea</taxon>
        <taxon>Rhabditida</taxon>
        <taxon>Rhabditina</taxon>
        <taxon>Rhabditomorpha</taxon>
        <taxon>Rhabditoidea</taxon>
        <taxon>Rhabditidae</taxon>
        <taxon>Peloderinae</taxon>
        <taxon>Caenorhabditis</taxon>
    </lineage>
</organism>
<comment type="function">
    <text evidence="5 6 7 8">During early embryogenesis, controls asymmetric cell division and the asymmetric localization of P granules of germline precursor P2 and its descendant P3 (PubMed:7555722). Probably upstream of tyrosine kinase src-1, plays a role in endoderm development by controlling spindle orientation during EMS blastomere cell division (PubMed:12110172). Controls EMS spindle orientation probably by promoting lin-5 and gpr-1/2 enrichment at, and let-99 exclusion from the junction between P2 and EMS cells (PubMed:12730122, PubMed:14534135).</text>
</comment>
<comment type="subcellular location">
    <subcellularLocation>
        <location evidence="4 5">Cell membrane</location>
        <topology evidence="9">Single-pass type I membrane protein</topology>
    </subcellularLocation>
    <text evidence="4 5">Localizes at the site of contact between EMS and P2 cells in the 4-cell stage embryo, between P3 and E cells in the 12-cell stage embryo and between P4 and Ep cells in the 26-cell stage embryo.</text>
</comment>
<comment type="developmental stage">
    <text evidence="4 5">Expressed at least in P2 germline cell at 4-cell stage and up to 26-cell stage embryos (PubMed:11003841, PubMed:12110172). Expressed only at L4 stage during larval development and then accumulates in adults (PubMed:11003841).</text>
</comment>
<comment type="domain">
    <text evidence="2">The protein kinase domain is predicted to be catalytically inactive.</text>
</comment>
<comment type="disruption phenotype">
    <text evidence="5 6 8">71 percent of embryos of mutant mothers develop into sterile adults with extra body muscle cells at the restrictive temperature (25 degrees Celsius) (PubMed:7555722). Low embryonic lethality (7-8 percent) (PubMed:7555722). Loss of lin-5 and grp-1/2 enrichment at the EMS/P2 cell boundaries at the 4-cell embryonic stage (PubMed:12730122). Decrease in phosphotyrosine levels at the site of contact between P2 and EMS cells (PubMed:12110172).</text>
</comment>
<comment type="similarity">
    <text evidence="9">Belongs to the protein kinase superfamily.</text>
</comment>
<accession>G5EBL2</accession>
<feature type="signal peptide" evidence="1">
    <location>
        <begin position="1"/>
        <end position="19"/>
    </location>
</feature>
<feature type="chain" id="PRO_5005349097" description="Protein mes-1" evidence="1">
    <location>
        <begin position="20"/>
        <end position="966"/>
    </location>
</feature>
<feature type="topological domain" description="Extracellular" evidence="9">
    <location>
        <begin position="20"/>
        <end position="470"/>
    </location>
</feature>
<feature type="transmembrane region" description="Helical" evidence="1">
    <location>
        <begin position="471"/>
        <end position="491"/>
    </location>
</feature>
<feature type="topological domain" description="Cytoplasmic" evidence="9">
    <location>
        <begin position="492"/>
        <end position="966"/>
    </location>
</feature>
<feature type="domain" description="Protein kinase" evidence="2">
    <location>
        <begin position="656"/>
        <end position="966"/>
    </location>
</feature>
<feature type="binding site" evidence="2">
    <location>
        <begin position="662"/>
        <end position="670"/>
    </location>
    <ligand>
        <name>ATP</name>
        <dbReference type="ChEBI" id="CHEBI:30616"/>
    </ligand>
</feature>
<feature type="binding site" evidence="2">
    <location>
        <position position="685"/>
    </location>
    <ligand>
        <name>ATP</name>
        <dbReference type="ChEBI" id="CHEBI:30616"/>
    </ligand>
</feature>
<feature type="glycosylation site" description="N-linked (GlcNAc...) asparagine" evidence="3">
    <location>
        <position position="62"/>
    </location>
</feature>
<feature type="glycosylation site" description="N-linked (GlcNAc...) asparagine" evidence="3">
    <location>
        <position position="126"/>
    </location>
</feature>
<feature type="glycosylation site" description="N-linked (GlcNAc...) asparagine" evidence="3">
    <location>
        <position position="183"/>
    </location>
</feature>
<feature type="glycosylation site" description="N-linked (GlcNAc...) asparagine" evidence="3">
    <location>
        <position position="214"/>
    </location>
</feature>
<feature type="glycosylation site" description="N-linked (GlcNAc...) asparagine" evidence="3">
    <location>
        <position position="251"/>
    </location>
</feature>
<feature type="glycosylation site" description="N-linked (GlcNAc...) asparagine" evidence="3">
    <location>
        <position position="372"/>
    </location>
</feature>
<feature type="mutagenesis site" description="In q367; 12 percent of mutant mothers' progeny is sterile at the permissive temperature (16 degrees Celsius) and 79 percent at the restrictive temperature (25 degrees Celsius). Low levels of embryonic lethality." evidence="8">
    <original>G</original>
    <variation>E</variation>
    <location>
        <position position="89"/>
    </location>
</feature>
<feature type="mutagenesis site" description="In q222; 6 percent of mutant mothers' progeny is sterile at the permissive temperature (16 degrees Celsius) and 77 percent at the restrictive temperature (25 degrees Celsius). Low levels of embryonic lethality." evidence="8">
    <original>S</original>
    <variation>N</variation>
    <location>
        <position position="441"/>
    </location>
</feature>
<keyword id="KW-0067">ATP-binding</keyword>
<keyword id="KW-0131">Cell cycle</keyword>
<keyword id="KW-0132">Cell division</keyword>
<keyword id="KW-1003">Cell membrane</keyword>
<keyword id="KW-0325">Glycoprotein</keyword>
<keyword id="KW-0472">Membrane</keyword>
<keyword id="KW-0498">Mitosis</keyword>
<keyword id="KW-0547">Nucleotide-binding</keyword>
<keyword id="KW-1185">Reference proteome</keyword>
<keyword id="KW-0732">Signal</keyword>
<keyword id="KW-0812">Transmembrane</keyword>
<keyword id="KW-1133">Transmembrane helix</keyword>
<evidence type="ECO:0000255" key="1"/>
<evidence type="ECO:0000255" key="2">
    <source>
        <dbReference type="PROSITE-ProRule" id="PRU00159"/>
    </source>
</evidence>
<evidence type="ECO:0000255" key="3">
    <source>
        <dbReference type="PROSITE-ProRule" id="PRU00498"/>
    </source>
</evidence>
<evidence type="ECO:0000269" key="4">
    <source>
    </source>
</evidence>
<evidence type="ECO:0000269" key="5">
    <source>
    </source>
</evidence>
<evidence type="ECO:0000269" key="6">
    <source>
    </source>
</evidence>
<evidence type="ECO:0000269" key="7">
    <source>
    </source>
</evidence>
<evidence type="ECO:0000269" key="8">
    <source>
    </source>
</evidence>
<evidence type="ECO:0000305" key="9"/>
<evidence type="ECO:0000312" key="10">
    <source>
        <dbReference type="EMBL" id="AAF13716.1"/>
    </source>
</evidence>
<evidence type="ECO:0000312" key="11">
    <source>
        <dbReference type="Proteomes" id="UP000001940"/>
    </source>
</evidence>
<evidence type="ECO:0000312" key="12">
    <source>
        <dbReference type="WormBase" id="F54F7.5"/>
    </source>
</evidence>
<gene>
    <name evidence="12" type="primary">mes-1</name>
    <name evidence="12" type="ORF">F54F7.5</name>
</gene>